<reference key="1">
    <citation type="journal article" date="2002" name="Nat. Biotechnol.">
        <title>Genome sequence of the dissimilatory metal ion-reducing bacterium Shewanella oneidensis.</title>
        <authorList>
            <person name="Heidelberg J.F."/>
            <person name="Paulsen I.T."/>
            <person name="Nelson K.E."/>
            <person name="Gaidos E.J."/>
            <person name="Nelson W.C."/>
            <person name="Read T.D."/>
            <person name="Eisen J.A."/>
            <person name="Seshadri R."/>
            <person name="Ward N.L."/>
            <person name="Methe B.A."/>
            <person name="Clayton R.A."/>
            <person name="Meyer T."/>
            <person name="Tsapin A."/>
            <person name="Scott J."/>
            <person name="Beanan M.J."/>
            <person name="Brinkac L.M."/>
            <person name="Daugherty S.C."/>
            <person name="DeBoy R.T."/>
            <person name="Dodson R.J."/>
            <person name="Durkin A.S."/>
            <person name="Haft D.H."/>
            <person name="Kolonay J.F."/>
            <person name="Madupu R."/>
            <person name="Peterson J.D."/>
            <person name="Umayam L.A."/>
            <person name="White O."/>
            <person name="Wolf A.M."/>
            <person name="Vamathevan J.J."/>
            <person name="Weidman J.F."/>
            <person name="Impraim M."/>
            <person name="Lee K."/>
            <person name="Berry K.J."/>
            <person name="Lee C."/>
            <person name="Mueller J."/>
            <person name="Khouri H.M."/>
            <person name="Gill J."/>
            <person name="Utterback T.R."/>
            <person name="McDonald L.A."/>
            <person name="Feldblyum T.V."/>
            <person name="Smith H.O."/>
            <person name="Venter J.C."/>
            <person name="Nealson K.H."/>
            <person name="Fraser C.M."/>
        </authorList>
    </citation>
    <scope>NUCLEOTIDE SEQUENCE [LARGE SCALE GENOMIC DNA]</scope>
    <source>
        <strain>ATCC 700550 / JCM 31522 / CIP 106686 / LMG 19005 / NCIMB 14063 / MR-1</strain>
    </source>
</reference>
<sequence length="157" mass="17096">MAEVANNEQQAPQFNIQRVYTKDVSFETPNSPAVFQKEWNPEVKLDLDTRSAKLADDVYEVVLSLTVTAQNGGETAFLCEVQQAGIFSIAGLTEPQLAHSLGAYCPNILFPYAREAVGSLVGRGTFPQLNLAPVNFDALFAQYVQQRQAAAAEEANA</sequence>
<protein>
    <recommendedName>
        <fullName evidence="1">Protein-export protein SecB</fullName>
    </recommendedName>
</protein>
<name>SECB_SHEON</name>
<evidence type="ECO:0000255" key="1">
    <source>
        <dbReference type="HAMAP-Rule" id="MF_00821"/>
    </source>
</evidence>
<organism>
    <name type="scientific">Shewanella oneidensis (strain ATCC 700550 / JCM 31522 / CIP 106686 / LMG 19005 / NCIMB 14063 / MR-1)</name>
    <dbReference type="NCBI Taxonomy" id="211586"/>
    <lineage>
        <taxon>Bacteria</taxon>
        <taxon>Pseudomonadati</taxon>
        <taxon>Pseudomonadota</taxon>
        <taxon>Gammaproteobacteria</taxon>
        <taxon>Alteromonadales</taxon>
        <taxon>Shewanellaceae</taxon>
        <taxon>Shewanella</taxon>
    </lineage>
</organism>
<comment type="function">
    <text evidence="1">One of the proteins required for the normal export of preproteins out of the cell cytoplasm. It is a molecular chaperone that binds to a subset of precursor proteins, maintaining them in a translocation-competent state. It also specifically binds to its receptor SecA.</text>
</comment>
<comment type="subunit">
    <text evidence="1">Homotetramer, a dimer of dimers. One homotetramer interacts with 1 SecA dimer.</text>
</comment>
<comment type="subcellular location">
    <subcellularLocation>
        <location evidence="1">Cytoplasm</location>
    </subcellularLocation>
</comment>
<comment type="similarity">
    <text evidence="1">Belongs to the SecB family.</text>
</comment>
<feature type="chain" id="PRO_0000055417" description="Protein-export protein SecB">
    <location>
        <begin position="1"/>
        <end position="157"/>
    </location>
</feature>
<dbReference type="EMBL" id="AE014299">
    <property type="protein sequence ID" value="AAN53139.1"/>
    <property type="molecule type" value="Genomic_DNA"/>
</dbReference>
<dbReference type="RefSeq" id="NP_715694.1">
    <property type="nucleotide sequence ID" value="NC_004347.2"/>
</dbReference>
<dbReference type="RefSeq" id="WP_011070466.1">
    <property type="nucleotide sequence ID" value="NC_004347.2"/>
</dbReference>
<dbReference type="SMR" id="Q8EKP0"/>
<dbReference type="STRING" id="211586.SO_0052"/>
<dbReference type="PaxDb" id="211586-SO_0052"/>
<dbReference type="KEGG" id="son:SO_0052"/>
<dbReference type="PATRIC" id="fig|211586.12.peg.52"/>
<dbReference type="eggNOG" id="COG1952">
    <property type="taxonomic scope" value="Bacteria"/>
</dbReference>
<dbReference type="HOGENOM" id="CLU_111574_1_0_6"/>
<dbReference type="OrthoDB" id="9795145at2"/>
<dbReference type="PhylomeDB" id="Q8EKP0"/>
<dbReference type="BioCyc" id="SONE211586:G1GMP-54-MONOMER"/>
<dbReference type="Proteomes" id="UP000008186">
    <property type="component" value="Chromosome"/>
</dbReference>
<dbReference type="GO" id="GO:0005737">
    <property type="term" value="C:cytoplasm"/>
    <property type="evidence" value="ECO:0007669"/>
    <property type="project" value="UniProtKB-SubCell"/>
</dbReference>
<dbReference type="GO" id="GO:0051082">
    <property type="term" value="F:unfolded protein binding"/>
    <property type="evidence" value="ECO:0007669"/>
    <property type="project" value="InterPro"/>
</dbReference>
<dbReference type="GO" id="GO:0006457">
    <property type="term" value="P:protein folding"/>
    <property type="evidence" value="ECO:0007669"/>
    <property type="project" value="UniProtKB-UniRule"/>
</dbReference>
<dbReference type="GO" id="GO:0051262">
    <property type="term" value="P:protein tetramerization"/>
    <property type="evidence" value="ECO:0007669"/>
    <property type="project" value="InterPro"/>
</dbReference>
<dbReference type="GO" id="GO:0015031">
    <property type="term" value="P:protein transport"/>
    <property type="evidence" value="ECO:0007669"/>
    <property type="project" value="UniProtKB-UniRule"/>
</dbReference>
<dbReference type="Gene3D" id="3.10.420.10">
    <property type="entry name" value="SecB-like"/>
    <property type="match status" value="1"/>
</dbReference>
<dbReference type="HAMAP" id="MF_00821">
    <property type="entry name" value="SecB"/>
    <property type="match status" value="1"/>
</dbReference>
<dbReference type="InterPro" id="IPR003708">
    <property type="entry name" value="SecB"/>
</dbReference>
<dbReference type="InterPro" id="IPR035958">
    <property type="entry name" value="SecB-like_sf"/>
</dbReference>
<dbReference type="NCBIfam" id="NF004393">
    <property type="entry name" value="PRK05751.1-4"/>
    <property type="match status" value="1"/>
</dbReference>
<dbReference type="NCBIfam" id="TIGR00809">
    <property type="entry name" value="secB"/>
    <property type="match status" value="1"/>
</dbReference>
<dbReference type="PANTHER" id="PTHR36918">
    <property type="match status" value="1"/>
</dbReference>
<dbReference type="PANTHER" id="PTHR36918:SF1">
    <property type="entry name" value="PROTEIN-EXPORT PROTEIN SECB"/>
    <property type="match status" value="1"/>
</dbReference>
<dbReference type="Pfam" id="PF02556">
    <property type="entry name" value="SecB"/>
    <property type="match status" value="1"/>
</dbReference>
<dbReference type="PRINTS" id="PR01594">
    <property type="entry name" value="SECBCHAPRONE"/>
</dbReference>
<dbReference type="SUPFAM" id="SSF54611">
    <property type="entry name" value="SecB-like"/>
    <property type="match status" value="1"/>
</dbReference>
<accession>Q8EKP0</accession>
<gene>
    <name evidence="1" type="primary">secB</name>
    <name type="ordered locus">SO_0052</name>
</gene>
<proteinExistence type="inferred from homology"/>
<keyword id="KW-0143">Chaperone</keyword>
<keyword id="KW-0963">Cytoplasm</keyword>
<keyword id="KW-0653">Protein transport</keyword>
<keyword id="KW-1185">Reference proteome</keyword>
<keyword id="KW-0811">Translocation</keyword>
<keyword id="KW-0813">Transport</keyword>